<reference key="1">
    <citation type="journal article" date="1996" name="Nucleic Acids Res.">
        <title>Complete sequence analysis of the genome of the bacterium Mycoplasma pneumoniae.</title>
        <authorList>
            <person name="Himmelreich R."/>
            <person name="Hilbert H."/>
            <person name="Plagens H."/>
            <person name="Pirkl E."/>
            <person name="Li B.-C."/>
            <person name="Herrmann R."/>
        </authorList>
    </citation>
    <scope>NUCLEOTIDE SEQUENCE [LARGE SCALE GENOMIC DNA]</scope>
    <source>
        <strain>ATCC 29342 / M129 / Subtype 1</strain>
    </source>
</reference>
<protein>
    <recommendedName>
        <fullName>Putative protein phosphatase</fullName>
        <ecNumber>3.1.3.16</ecNumber>
    </recommendedName>
</protein>
<keyword id="KW-0378">Hydrolase</keyword>
<keyword id="KW-0904">Protein phosphatase</keyword>
<keyword id="KW-1185">Reference proteome</keyword>
<accession>P75525</accession>
<feature type="chain" id="PRO_0000057796" description="Putative protein phosphatase">
    <location>
        <begin position="1"/>
        <end position="259"/>
    </location>
</feature>
<feature type="domain" description="PPM-type phosphatase" evidence="1">
    <location>
        <begin position="8"/>
        <end position="255"/>
    </location>
</feature>
<sequence>MDSTNQNLFASLSKKGPVRKENQDFSVVTFNRFGQLMSLVCDGLGGYKGGKMASALVSEVFTKSFTVFDFHSQTERAVKQWFEITLIEARRTLEQYFQTIKRNQVQFARMATTLVLSIISKQNIWTFWVGDSRAYLINSYQSLQITEDHNLYNQLLQMHATPDVIASYKDKLLALTATVSKDQERQLKYSFRCDVVNAWDFLLLCSDGLYNFLDPNCFYEVITSAPNLKKAVTQLAKLSLDNASNDNITLNLINLKQWH</sequence>
<evidence type="ECO:0000255" key="1">
    <source>
        <dbReference type="PROSITE-ProRule" id="PRU01082"/>
    </source>
</evidence>
<name>PPH_MYCPN</name>
<organism>
    <name type="scientific">Mycoplasma pneumoniae (strain ATCC 29342 / M129 / Subtype 1)</name>
    <name type="common">Mycoplasmoides pneumoniae</name>
    <dbReference type="NCBI Taxonomy" id="272634"/>
    <lineage>
        <taxon>Bacteria</taxon>
        <taxon>Bacillati</taxon>
        <taxon>Mycoplasmatota</taxon>
        <taxon>Mycoplasmoidales</taxon>
        <taxon>Mycoplasmoidaceae</taxon>
        <taxon>Mycoplasmoides</taxon>
    </lineage>
</organism>
<gene>
    <name type="ordered locus">MPN_247</name>
    <name type="ORF">MP585</name>
</gene>
<dbReference type="EC" id="3.1.3.16"/>
<dbReference type="EMBL" id="U00089">
    <property type="protein sequence ID" value="AAB96233.1"/>
    <property type="molecule type" value="Genomic_DNA"/>
</dbReference>
<dbReference type="PIR" id="S73911">
    <property type="entry name" value="S73911"/>
</dbReference>
<dbReference type="RefSeq" id="NP_109935.1">
    <property type="nucleotide sequence ID" value="NC_000912.1"/>
</dbReference>
<dbReference type="RefSeq" id="WP_010874604.1">
    <property type="nucleotide sequence ID" value="NZ_OU342337.1"/>
</dbReference>
<dbReference type="SMR" id="P75525"/>
<dbReference type="IntAct" id="P75525">
    <property type="interactions" value="3"/>
</dbReference>
<dbReference type="STRING" id="272634.MPN_247"/>
<dbReference type="EnsemblBacteria" id="AAB96233">
    <property type="protein sequence ID" value="AAB96233"/>
    <property type="gene ID" value="MPN_247"/>
</dbReference>
<dbReference type="KEGG" id="mpn:MPN_247"/>
<dbReference type="PATRIC" id="fig|272634.6.peg.266"/>
<dbReference type="HOGENOM" id="CLU_034545_4_1_14"/>
<dbReference type="OrthoDB" id="9801841at2"/>
<dbReference type="BioCyc" id="MPNE272634:G1GJ3-390-MONOMER"/>
<dbReference type="Proteomes" id="UP000000808">
    <property type="component" value="Chromosome"/>
</dbReference>
<dbReference type="GO" id="GO:0004722">
    <property type="term" value="F:protein serine/threonine phosphatase activity"/>
    <property type="evidence" value="ECO:0007669"/>
    <property type="project" value="UniProtKB-EC"/>
</dbReference>
<dbReference type="CDD" id="cd00143">
    <property type="entry name" value="PP2Cc"/>
    <property type="match status" value="1"/>
</dbReference>
<dbReference type="Gene3D" id="3.60.40.10">
    <property type="entry name" value="PPM-type phosphatase domain"/>
    <property type="match status" value="1"/>
</dbReference>
<dbReference type="InterPro" id="IPR015655">
    <property type="entry name" value="PP2C"/>
</dbReference>
<dbReference type="InterPro" id="IPR036457">
    <property type="entry name" value="PPM-type-like_dom_sf"/>
</dbReference>
<dbReference type="InterPro" id="IPR001932">
    <property type="entry name" value="PPM-type_phosphatase-like_dom"/>
</dbReference>
<dbReference type="PANTHER" id="PTHR47992">
    <property type="entry name" value="PROTEIN PHOSPHATASE"/>
    <property type="match status" value="1"/>
</dbReference>
<dbReference type="Pfam" id="PF13672">
    <property type="entry name" value="PP2C_2"/>
    <property type="match status" value="1"/>
</dbReference>
<dbReference type="SMART" id="SM00332">
    <property type="entry name" value="PP2Cc"/>
    <property type="match status" value="1"/>
</dbReference>
<dbReference type="SUPFAM" id="SSF81606">
    <property type="entry name" value="PP2C-like"/>
    <property type="match status" value="1"/>
</dbReference>
<dbReference type="PROSITE" id="PS51746">
    <property type="entry name" value="PPM_2"/>
    <property type="match status" value="1"/>
</dbReference>
<comment type="catalytic activity">
    <reaction>
        <text>O-phospho-L-seryl-[protein] + H2O = L-seryl-[protein] + phosphate</text>
        <dbReference type="Rhea" id="RHEA:20629"/>
        <dbReference type="Rhea" id="RHEA-COMP:9863"/>
        <dbReference type="Rhea" id="RHEA-COMP:11604"/>
        <dbReference type="ChEBI" id="CHEBI:15377"/>
        <dbReference type="ChEBI" id="CHEBI:29999"/>
        <dbReference type="ChEBI" id="CHEBI:43474"/>
        <dbReference type="ChEBI" id="CHEBI:83421"/>
        <dbReference type="EC" id="3.1.3.16"/>
    </reaction>
</comment>
<comment type="catalytic activity">
    <reaction>
        <text>O-phospho-L-threonyl-[protein] + H2O = L-threonyl-[protein] + phosphate</text>
        <dbReference type="Rhea" id="RHEA:47004"/>
        <dbReference type="Rhea" id="RHEA-COMP:11060"/>
        <dbReference type="Rhea" id="RHEA-COMP:11605"/>
        <dbReference type="ChEBI" id="CHEBI:15377"/>
        <dbReference type="ChEBI" id="CHEBI:30013"/>
        <dbReference type="ChEBI" id="CHEBI:43474"/>
        <dbReference type="ChEBI" id="CHEBI:61977"/>
        <dbReference type="EC" id="3.1.3.16"/>
    </reaction>
</comment>
<proteinExistence type="predicted"/>